<evidence type="ECO:0000250" key="1"/>
<evidence type="ECO:0000250" key="2">
    <source>
        <dbReference type="UniProtKB" id="O95273"/>
    </source>
</evidence>
<evidence type="ECO:0000305" key="3"/>
<feature type="initiator methionine" description="Removed" evidence="2">
    <location>
        <position position="1"/>
    </location>
</feature>
<feature type="chain" id="PRO_0000323375" description="Cyclin-D1-binding protein 1">
    <location>
        <begin position="2"/>
        <end position="360"/>
    </location>
</feature>
<feature type="region of interest" description="Required for interaction with CCND1" evidence="1">
    <location>
        <begin position="2"/>
        <end position="208"/>
    </location>
</feature>
<feature type="region of interest" description="Interaction with RPLP0" evidence="1">
    <location>
        <begin position="2"/>
        <end position="190"/>
    </location>
</feature>
<feature type="region of interest" description="Interaction with TCF3" evidence="1">
    <location>
        <begin position="2"/>
        <end position="184"/>
    </location>
</feature>
<feature type="region of interest" description="Interaction with TCF3" evidence="1">
    <location>
        <begin position="150"/>
        <end position="360"/>
    </location>
</feature>
<feature type="region of interest" description="Interaction with RPLP0" evidence="1">
    <location>
        <begin position="240"/>
        <end position="360"/>
    </location>
</feature>
<feature type="modified residue" description="N-acetylalanine" evidence="2">
    <location>
        <position position="2"/>
    </location>
</feature>
<dbReference type="EMBL" id="CR857119">
    <property type="protein sequence ID" value="CAH89423.1"/>
    <property type="molecule type" value="mRNA"/>
</dbReference>
<dbReference type="RefSeq" id="NP_001124602.1">
    <property type="nucleotide sequence ID" value="NM_001131130.2"/>
</dbReference>
<dbReference type="SMR" id="Q5RFN4"/>
<dbReference type="FunCoup" id="Q5RFN4">
    <property type="interactions" value="2809"/>
</dbReference>
<dbReference type="STRING" id="9601.ENSPPYP00000007258"/>
<dbReference type="Ensembl" id="ENSPPYT00000007559.2">
    <property type="protein sequence ID" value="ENSPPYP00000007258.2"/>
    <property type="gene ID" value="ENSPPYG00000006406.2"/>
</dbReference>
<dbReference type="GeneID" id="100171439"/>
<dbReference type="KEGG" id="pon:100171439"/>
<dbReference type="CTD" id="23582"/>
<dbReference type="eggNOG" id="ENOG502SGCW">
    <property type="taxonomic scope" value="Eukaryota"/>
</dbReference>
<dbReference type="GeneTree" id="ENSGT00390000018016"/>
<dbReference type="HOGENOM" id="CLU_067580_0_0_1"/>
<dbReference type="InParanoid" id="Q5RFN4"/>
<dbReference type="OrthoDB" id="41588at2759"/>
<dbReference type="Proteomes" id="UP000001595">
    <property type="component" value="Chromosome 15"/>
</dbReference>
<dbReference type="GO" id="GO:0005737">
    <property type="term" value="C:cytoplasm"/>
    <property type="evidence" value="ECO:0007669"/>
    <property type="project" value="UniProtKB-SubCell"/>
</dbReference>
<dbReference type="GO" id="GO:0005634">
    <property type="term" value="C:nucleus"/>
    <property type="evidence" value="ECO:0007669"/>
    <property type="project" value="UniProtKB-SubCell"/>
</dbReference>
<dbReference type="FunFam" id="1.20.1410.10:FF:000005">
    <property type="entry name" value="cyclin-D1-binding protein 1"/>
    <property type="match status" value="1"/>
</dbReference>
<dbReference type="FunFam" id="1.20.1420.10:FF:000008">
    <property type="entry name" value="Cyclin-D1-binding protein 1 homolog"/>
    <property type="match status" value="1"/>
</dbReference>
<dbReference type="Gene3D" id="1.20.1410.10">
    <property type="entry name" value="I/LWEQ domain"/>
    <property type="match status" value="1"/>
</dbReference>
<dbReference type="Gene3D" id="1.20.1420.10">
    <property type="entry name" value="Talin, central domain"/>
    <property type="match status" value="1"/>
</dbReference>
<dbReference type="InterPro" id="IPR026907">
    <property type="entry name" value="GCIP-like"/>
</dbReference>
<dbReference type="InterPro" id="IPR049317">
    <property type="entry name" value="GCIP-like_N"/>
</dbReference>
<dbReference type="InterPro" id="IPR049318">
    <property type="entry name" value="GCIP_C"/>
</dbReference>
<dbReference type="PANTHER" id="PTHR15492">
    <property type="entry name" value="CYCLIN D1-BINDING PROTEIN 1"/>
    <property type="match status" value="1"/>
</dbReference>
<dbReference type="PANTHER" id="PTHR15492:SF1">
    <property type="entry name" value="CYCLIN-D1-BINDING PROTEIN 1"/>
    <property type="match status" value="1"/>
</dbReference>
<dbReference type="Pfam" id="PF20936">
    <property type="entry name" value="GCIP_C"/>
    <property type="match status" value="1"/>
</dbReference>
<dbReference type="Pfam" id="PF13324">
    <property type="entry name" value="GCIP_N"/>
    <property type="match status" value="1"/>
</dbReference>
<keyword id="KW-0007">Acetylation</keyword>
<keyword id="KW-0131">Cell cycle</keyword>
<keyword id="KW-0963">Cytoplasm</keyword>
<keyword id="KW-0539">Nucleus</keyword>
<keyword id="KW-0597">Phosphoprotein</keyword>
<keyword id="KW-1185">Reference proteome</keyword>
<protein>
    <recommendedName>
        <fullName>Cyclin-D1-binding protein 1</fullName>
    </recommendedName>
</protein>
<accession>Q5RFN4</accession>
<proteinExistence type="evidence at transcript level"/>
<gene>
    <name type="primary">CCNDBP1</name>
</gene>
<sequence>MASATAPAAAVPTLASPLGQLRHLAEELRLLLPRVRVGEAQETTEEFNREMFWRRLNEAAVTVSREATTLTTVFSQLPLPSAQETQKFCEQVHAAIKAFIAVYYLLPKDQGITLRKLVRGATLDIVDGMAQLMEVLSITPTQSPENNELISYNSVWVACQQMPHIPRDNKAAALLMLTKNVDFVKDAHEEMERAVEECDPYSGLLNDTEENNSDNHNDEDDVLGFPSNQDLYWSEDDQELIIPCLALVRASKACLKKIRILVAENGKKDQVAQLDDIVDISDEISPSVDDLALSIYPPMCHLTVRINSAKLVSVLKKALEITKASHVTPQPEDSWIPLLINAIDHCMNRIKELTQSELEL</sequence>
<organism>
    <name type="scientific">Pongo abelii</name>
    <name type="common">Sumatran orangutan</name>
    <name type="synonym">Pongo pygmaeus abelii</name>
    <dbReference type="NCBI Taxonomy" id="9601"/>
    <lineage>
        <taxon>Eukaryota</taxon>
        <taxon>Metazoa</taxon>
        <taxon>Chordata</taxon>
        <taxon>Craniata</taxon>
        <taxon>Vertebrata</taxon>
        <taxon>Euteleostomi</taxon>
        <taxon>Mammalia</taxon>
        <taxon>Eutheria</taxon>
        <taxon>Euarchontoglires</taxon>
        <taxon>Primates</taxon>
        <taxon>Haplorrhini</taxon>
        <taxon>Catarrhini</taxon>
        <taxon>Hominidae</taxon>
        <taxon>Pongo</taxon>
    </lineage>
</organism>
<comment type="function">
    <text evidence="1">May negatively regulate cell cycle progression. May act at least in part via inhibition of the cyclin-D1/CDK4 complex, thereby preventing phosphorylation of RB1 and blocking E2F-dependent transcription (By similarity).</text>
</comment>
<comment type="subunit">
    <text evidence="1">Interacts with CCND1 and GRAP2. May also interact with COPS5, RPLP0, SIRT6, SYF2 and TCF3.</text>
</comment>
<comment type="subcellular location">
    <subcellularLocation>
        <location evidence="1">Cytoplasm</location>
    </subcellularLocation>
    <subcellularLocation>
        <location evidence="1">Nucleus</location>
    </subcellularLocation>
</comment>
<comment type="PTM">
    <text evidence="1">Phosphorylated.</text>
</comment>
<comment type="similarity">
    <text evidence="3">Belongs to the CCNDBP1 family.</text>
</comment>
<name>CCDB1_PONAB</name>
<reference key="1">
    <citation type="submission" date="2004-11" db="EMBL/GenBank/DDBJ databases">
        <authorList>
            <consortium name="The German cDNA consortium"/>
        </authorList>
    </citation>
    <scope>NUCLEOTIDE SEQUENCE [LARGE SCALE MRNA]</scope>
    <source>
        <tissue>Heart</tissue>
    </source>
</reference>